<name>TRIM7_MOUSE</name>
<evidence type="ECO:0000250" key="1">
    <source>
        <dbReference type="UniProtKB" id="Q9C029"/>
    </source>
</evidence>
<evidence type="ECO:0000255" key="2"/>
<evidence type="ECO:0000255" key="3">
    <source>
        <dbReference type="PROSITE-ProRule" id="PRU00024"/>
    </source>
</evidence>
<evidence type="ECO:0000255" key="4">
    <source>
        <dbReference type="PROSITE-ProRule" id="PRU00175"/>
    </source>
</evidence>
<evidence type="ECO:0000255" key="5">
    <source>
        <dbReference type="PROSITE-ProRule" id="PRU00548"/>
    </source>
</evidence>
<evidence type="ECO:0000269" key="6">
    <source>
    </source>
</evidence>
<evidence type="ECO:0000269" key="7">
    <source>
    </source>
</evidence>
<evidence type="ECO:0000269" key="8">
    <source>
    </source>
</evidence>
<evidence type="ECO:0000303" key="9">
    <source>
    </source>
</evidence>
<evidence type="ECO:0000303" key="10">
    <source ref="2"/>
</evidence>
<evidence type="ECO:0000305" key="11"/>
<reference key="1">
    <citation type="journal article" date="2001" name="EMBO J.">
        <title>The tripartite motif family identifies cell compartments.</title>
        <authorList>
            <person name="Reymond A."/>
            <person name="Meroni G."/>
            <person name="Fantozzi A."/>
            <person name="Merla G."/>
            <person name="Cairo S."/>
            <person name="Luzi L."/>
            <person name="Riganelli D."/>
            <person name="Zanaria E."/>
            <person name="Messali S."/>
            <person name="Cainarca S."/>
            <person name="Guffanti A."/>
            <person name="Minucci S."/>
            <person name="Pelicci P.G."/>
            <person name="Ballabio A."/>
        </authorList>
    </citation>
    <scope>NUCLEOTIDE SEQUENCE [MRNA] (ISOFORM 3)</scope>
</reference>
<reference key="2">
    <citation type="submission" date="2001-07" db="EMBL/GenBank/DDBJ databases">
        <title>Identification of human skeletal muscle proteins which interact with glycogenin.</title>
        <authorList>
            <person name="Skurat A.V."/>
            <person name="Dietrich A.D."/>
            <person name="Zhai L."/>
            <person name="Roach P.J."/>
        </authorList>
    </citation>
    <scope>NUCLEOTIDE SEQUENCE [MRNA] (ISOFORM 2)</scope>
    <source>
        <strain>C3H/HeJ</strain>
    </source>
</reference>
<reference key="3">
    <citation type="journal article" date="2009" name="PLoS Biol.">
        <title>Lineage-specific biology revealed by a finished genome assembly of the mouse.</title>
        <authorList>
            <person name="Church D.M."/>
            <person name="Goodstadt L."/>
            <person name="Hillier L.W."/>
            <person name="Zody M.C."/>
            <person name="Goldstein S."/>
            <person name="She X."/>
            <person name="Bult C.J."/>
            <person name="Agarwala R."/>
            <person name="Cherry J.L."/>
            <person name="DiCuccio M."/>
            <person name="Hlavina W."/>
            <person name="Kapustin Y."/>
            <person name="Meric P."/>
            <person name="Maglott D."/>
            <person name="Birtle Z."/>
            <person name="Marques A.C."/>
            <person name="Graves T."/>
            <person name="Zhou S."/>
            <person name="Teague B."/>
            <person name="Potamousis K."/>
            <person name="Churas C."/>
            <person name="Place M."/>
            <person name="Herschleb J."/>
            <person name="Runnheim R."/>
            <person name="Forrest D."/>
            <person name="Amos-Landgraf J."/>
            <person name="Schwartz D.C."/>
            <person name="Cheng Z."/>
            <person name="Lindblad-Toh K."/>
            <person name="Eichler E.E."/>
            <person name="Ponting C.P."/>
        </authorList>
    </citation>
    <scope>NUCLEOTIDE SEQUENCE [LARGE SCALE GENOMIC DNA] (ISOFORM 1)</scope>
    <source>
        <strain>C57BL/6J</strain>
    </source>
</reference>
<reference key="4">
    <citation type="journal article" date="2019" name="Mol. Immunol.">
        <title>E3 ubiquitin ligase tripartite motif 7 positively regulates the TLR4-mediated immune response via its E3 ligase domain in macrophages.</title>
        <authorList>
            <person name="Lu M."/>
            <person name="Zhu X."/>
            <person name="Yang Z."/>
            <person name="Zhang W."/>
            <person name="Sun Z."/>
            <person name="Ji Q."/>
            <person name="Chen X."/>
            <person name="Zhu J."/>
            <person name="Wang C."/>
            <person name="Nie S."/>
        </authorList>
    </citation>
    <scope>FUNCTION</scope>
    <scope>TISSUE SPECIFICITY</scope>
</reference>
<reference key="5">
    <citation type="journal article" date="2020" name="PLoS Pathog.">
        <title>RNF90 negatively regulates cellular antiviral responses by targeting MITA for degradation.</title>
        <authorList>
            <person name="Yang B."/>
            <person name="Liu Y."/>
            <person name="Cui Y."/>
            <person name="Song D."/>
            <person name="Zhang G."/>
            <person name="Ma S."/>
            <person name="Liu Y."/>
            <person name="Chen M."/>
            <person name="Chen F."/>
            <person name="Wang H."/>
            <person name="Wang J."/>
        </authorList>
    </citation>
    <scope>FUNCTION</scope>
    <scope>DISRUPTION PHENOTYPE</scope>
</reference>
<reference key="6">
    <citation type="journal article" date="2022" name="J. Virol.">
        <title>Selective Polyprotein Processing Determines Norovirus Sensitivity to Trim7.</title>
        <authorList>
            <person name="Sullender M.E."/>
            <person name="Pierce L.R."/>
            <person name="Annaswamy Srinivas M."/>
            <person name="Crockett S.L."/>
            <person name="Dunlap B.F."/>
            <person name="Rodgers R."/>
            <person name="Schriefer L.A."/>
            <person name="Kennedy E.A."/>
            <person name="Stewart B.M."/>
            <person name="Doench J.G."/>
            <person name="Baldridge M.T."/>
            <person name="Orchard R.C."/>
        </authorList>
    </citation>
    <scope>FUNCTION</scope>
</reference>
<protein>
    <recommendedName>
        <fullName evidence="11">E3 ubiquitin-protein ligase TRIM7</fullName>
        <ecNumber evidence="1">2.3.2.27</ecNumber>
    </recommendedName>
    <alternativeName>
        <fullName>Glycogenin-interacting protein</fullName>
    </alternativeName>
    <alternativeName>
        <fullName>Tripartite motif-containing protein 7</fullName>
    </alternativeName>
</protein>
<comment type="function">
    <text evidence="1 6 7 8">E3 ubiquitin-protein ligase that have both tumor-promoting and tumor-suppressing activities and functions in several biological processes including innate immunity, regulation of ferroptosis as well as cell proliferation and migration. Acts as an antiviral effector against multiple viruses by targeting specific viral proteins for ubiquitination and degradation including norovirus NTPase protein. Mechanistically, recognizes the C-terminal glutamine-containing motif generated by viral proteases that process the polyproteins and trigger their ubiquitination and subsequent degradation (PubMed:35972292). Mediates 'Lys-63'-linked polyubiquitination and stabilization of the JUN coactivator RNF187 in response to growth factor signaling via the MEK/ERK pathway, thereby regulating JUN transactivation and cellular proliferation (By similarity). Promotes the TLR4-mediated signaling activation through its E3 ligase domain leading to production of pro-inflammatory cytokines and type I interferon (PubMed:30928727). Also plays a negative role in the regulation of exogenous cytosolic DNA virus-triggered immune response. Mechanistically, enhances the 'Lys-48'-linked ubiquitination of STING1 leading to its proteasome-dependent degradation. Mediates the ubiquitination of the SIN3-HDAC chromatin remodeling complex component BRMS1. Modulates NCOA4-mediated ferritinophagy and ferroptosis in glioblastoma cells by ubiquitinating NCOA4, leading to its degradation (PubMed:32126128).</text>
</comment>
<comment type="catalytic activity">
    <reaction evidence="1">
        <text>S-ubiquitinyl-[E2 ubiquitin-conjugating enzyme]-L-cysteine + [acceptor protein]-L-lysine = [E2 ubiquitin-conjugating enzyme]-L-cysteine + N(6)-ubiquitinyl-[acceptor protein]-L-lysine.</text>
        <dbReference type="EC" id="2.3.2.27"/>
    </reaction>
</comment>
<comment type="pathway">
    <text evidence="1">Protein modification; protein ubiquitination.</text>
</comment>
<comment type="subunit">
    <text evidence="1">Forms homodimers. Interacts with GNIP2. Interacts with GYG1. Interacts with RNF187 (via C-terminus).</text>
</comment>
<comment type="subcellular location">
    <subcellularLocation>
        <location evidence="1">Nucleus</location>
    </subcellularLocation>
    <subcellularLocation>
        <location evidence="1">Cytoplasm</location>
    </subcellularLocation>
    <subcellularLocation>
        <location evidence="1">Golgi apparatus</location>
    </subcellularLocation>
</comment>
<comment type="alternative products">
    <event type="alternative splicing"/>
    <isoform>
        <id>Q923T7-1</id>
        <name>1</name>
        <sequence type="displayed"/>
    </isoform>
    <isoform>
        <id>Q923T7-2</id>
        <name>2</name>
        <sequence type="described" ref="VSP_012289"/>
    </isoform>
    <isoform>
        <id>Q923T7-3</id>
        <name>3</name>
        <sequence type="described" ref="VSP_012290 VSP_012291"/>
    </isoform>
</comment>
<comment type="tissue specificity">
    <text evidence="6">Highly expressed in antigen-presenting cells.</text>
</comment>
<comment type="domain">
    <text evidence="1">The B30.2 domain mediates interaction with GYG.</text>
</comment>
<comment type="domain">
    <text evidence="1">The coiled-coil region mediates homodimerization and heterodimerization.</text>
</comment>
<comment type="PTM">
    <text evidence="1">Phosphorylated at Ser-106 by RPS6KA5/MSK1, which stimulates the ubiquitin ligase activity.</text>
</comment>
<comment type="PTM">
    <text evidence="1">Auto-ubiquitinates via 'Lys-63'-linked polyubiquitination.</text>
</comment>
<comment type="disruption phenotype">
    <text evidence="7">Deletion mutant protects mice from DNA virus infection.</text>
</comment>
<comment type="similarity">
    <text evidence="11">Belongs to the TRIM/RBCC family.</text>
</comment>
<feature type="chain" id="PRO_0000056205" description="E3 ubiquitin-protein ligase TRIM7">
    <location>
        <begin position="1"/>
        <end position="510"/>
    </location>
</feature>
<feature type="domain" description="B30.2/SPRY" evidence="5">
    <location>
        <begin position="323"/>
        <end position="510"/>
    </location>
</feature>
<feature type="zinc finger region" description="RING-type" evidence="4">
    <location>
        <begin position="29"/>
        <end position="81"/>
    </location>
</feature>
<feature type="zinc finger region" description="B box-type" evidence="3">
    <location>
        <begin position="124"/>
        <end position="165"/>
    </location>
</feature>
<feature type="coiled-coil region" evidence="2">
    <location>
        <begin position="165"/>
        <end position="275"/>
    </location>
</feature>
<feature type="binding site" evidence="3">
    <location>
        <position position="129"/>
    </location>
    <ligand>
        <name>Zn(2+)</name>
        <dbReference type="ChEBI" id="CHEBI:29105"/>
    </ligand>
</feature>
<feature type="binding site" evidence="3">
    <location>
        <position position="132"/>
    </location>
    <ligand>
        <name>Zn(2+)</name>
        <dbReference type="ChEBI" id="CHEBI:29105"/>
    </ligand>
</feature>
<feature type="binding site" evidence="3">
    <location>
        <position position="151"/>
    </location>
    <ligand>
        <name>Zn(2+)</name>
        <dbReference type="ChEBI" id="CHEBI:29105"/>
    </ligand>
</feature>
<feature type="binding site" evidence="3">
    <location>
        <position position="157"/>
    </location>
    <ligand>
        <name>Zn(2+)</name>
        <dbReference type="ChEBI" id="CHEBI:29105"/>
    </ligand>
</feature>
<feature type="modified residue" description="Phosphoserine; by RPS6KA5" evidence="1">
    <location>
        <position position="106"/>
    </location>
</feature>
<feature type="splice variant" id="VSP_012289" description="In isoform 2." evidence="10">
    <location>
        <begin position="1"/>
        <end position="207"/>
    </location>
</feature>
<feature type="splice variant" id="VSP_012290" description="In isoform 3." evidence="9">
    <original>KQMAAEKEKVGAEFQALRAFLVEQEGRLLSRLEVLSRE</original>
    <variation>VSPSVRSIGLWMTKAERERERERERERERERERIWLKQ</variation>
    <location>
        <begin position="206"/>
        <end position="243"/>
    </location>
</feature>
<feature type="splice variant" id="VSP_012291" description="In isoform 3." evidence="9">
    <location>
        <begin position="244"/>
        <end position="510"/>
    </location>
</feature>
<organism>
    <name type="scientific">Mus musculus</name>
    <name type="common">Mouse</name>
    <dbReference type="NCBI Taxonomy" id="10090"/>
    <lineage>
        <taxon>Eukaryota</taxon>
        <taxon>Metazoa</taxon>
        <taxon>Chordata</taxon>
        <taxon>Craniata</taxon>
        <taxon>Vertebrata</taxon>
        <taxon>Euteleostomi</taxon>
        <taxon>Mammalia</taxon>
        <taxon>Eutheria</taxon>
        <taxon>Euarchontoglires</taxon>
        <taxon>Glires</taxon>
        <taxon>Rodentia</taxon>
        <taxon>Myomorpha</taxon>
        <taxon>Muroidea</taxon>
        <taxon>Muridae</taxon>
        <taxon>Murinae</taxon>
        <taxon>Mus</taxon>
        <taxon>Mus</taxon>
    </lineage>
</organism>
<gene>
    <name type="primary">Trim7</name>
    <name type="synonym">Gnip</name>
</gene>
<proteinExistence type="evidence at transcript level"/>
<sequence>MATVGPRTGPNAGAEALALAAELQGEATCSICLEFFREPVSVECGHSFCRACIMRCWERPGAGTGTATRTLPCPLPCPQCREPARPSQLRPNRQLAAVVSLLRRFSLPPTAPGERGTPAVPARAAAARCSQHGEQLKLYCQDDGRAICVVCDRAREHRSHAVLPLEEAVQEAKELLDSRLRALKKVLEDYEAFRSTEERESKELLKQMAAEKEKVGAEFQALRAFLVEQEGRLLSRLEVLSREVTQKQNENLAQLEGEITQLSKLSGQIQETAQKPDLDFLQEFKSTLSKCSSVPSSKPTTVSSEMKNKVWNVSLKSFVLKGLLKKFKEDLQGELEKEEKVELTLDPDTANPRLILSLDLKSVRLGQRAQDLPNHPRRFDTNTRVLASCGFSSGRHHWEVEVGSKDGWAFGVARESVRRKGLTPFTPEEGVWAMQLNNGQYWAVTSPERTQLNCGHLSRVRVALDLEVGAVSFYAVEDMRHLYTFRVNFQERVFPLFSVCSTGTYLRIWP</sequence>
<accession>Q923T7</accession>
<accession>Q5NCB6</accession>
<accession>Q99PQ5</accession>
<dbReference type="EC" id="2.3.2.27" evidence="1"/>
<dbReference type="EMBL" id="AF220033">
    <property type="protein sequence ID" value="AAG53487.1"/>
    <property type="molecule type" value="mRNA"/>
</dbReference>
<dbReference type="EMBL" id="AF396656">
    <property type="protein sequence ID" value="AAK85382.1"/>
    <property type="molecule type" value="mRNA"/>
</dbReference>
<dbReference type="EMBL" id="AL645849">
    <property type="status" value="NOT_ANNOTATED_CDS"/>
    <property type="molecule type" value="Genomic_DNA"/>
</dbReference>
<dbReference type="CCDS" id="CCDS48779.1">
    <molecule id="Q923T7-2"/>
</dbReference>
<dbReference type="CCDS" id="CCDS83797.1">
    <molecule id="Q923T7-1"/>
</dbReference>
<dbReference type="RefSeq" id="NP_444396.2">
    <molecule id="Q923T7-2"/>
    <property type="nucleotide sequence ID" value="NM_053166.2"/>
</dbReference>
<dbReference type="RefSeq" id="XP_006534638.1">
    <molecule id="Q923T7-2"/>
    <property type="nucleotide sequence ID" value="XM_006534575.5"/>
</dbReference>
<dbReference type="SMR" id="Q923T7"/>
<dbReference type="BioGRID" id="220444">
    <property type="interactions" value="3"/>
</dbReference>
<dbReference type="FunCoup" id="Q923T7">
    <property type="interactions" value="728"/>
</dbReference>
<dbReference type="STRING" id="10090.ENSMUSP00000039011"/>
<dbReference type="GlyGen" id="Q923T7">
    <property type="glycosylation" value="2 sites, 1 O-linked glycan (2 sites)"/>
</dbReference>
<dbReference type="iPTMnet" id="Q923T7"/>
<dbReference type="PhosphoSitePlus" id="Q923T7"/>
<dbReference type="PaxDb" id="10090-ENSMUSP00000104836"/>
<dbReference type="ProteomicsDB" id="298127">
    <molecule id="Q923T7-1"/>
</dbReference>
<dbReference type="ProteomicsDB" id="298128">
    <molecule id="Q923T7-2"/>
</dbReference>
<dbReference type="ProteomicsDB" id="298129">
    <molecule id="Q923T7-3"/>
</dbReference>
<dbReference type="Antibodypedia" id="29710">
    <property type="antibodies" value="149 antibodies from 26 providers"/>
</dbReference>
<dbReference type="DNASU" id="94089"/>
<dbReference type="Ensembl" id="ENSMUST00000109213.9">
    <molecule id="Q923T7-2"/>
    <property type="protein sequence ID" value="ENSMUSP00000104836.3"/>
    <property type="gene ID" value="ENSMUSG00000040350.17"/>
</dbReference>
<dbReference type="GeneID" id="94089"/>
<dbReference type="KEGG" id="mmu:94089"/>
<dbReference type="UCSC" id="uc007ipd.2">
    <molecule id="Q923T7-1"/>
    <property type="organism name" value="mouse"/>
</dbReference>
<dbReference type="AGR" id="MGI:2137353"/>
<dbReference type="CTD" id="81786"/>
<dbReference type="MGI" id="MGI:2137353">
    <property type="gene designation" value="Trim7"/>
</dbReference>
<dbReference type="VEuPathDB" id="HostDB:ENSMUSG00000040350"/>
<dbReference type="eggNOG" id="KOG2177">
    <property type="taxonomic scope" value="Eukaryota"/>
</dbReference>
<dbReference type="GeneTree" id="ENSGT01030000234669"/>
<dbReference type="HOGENOM" id="CLU_013137_0_0_1"/>
<dbReference type="InParanoid" id="Q923T7"/>
<dbReference type="OMA" id="DMKMHIC"/>
<dbReference type="OrthoDB" id="654191at2759"/>
<dbReference type="PhylomeDB" id="Q923T7"/>
<dbReference type="TreeFam" id="TF317532"/>
<dbReference type="UniPathway" id="UPA00143"/>
<dbReference type="BioGRID-ORCS" id="94089">
    <property type="hits" value="3 hits in 62 CRISPR screens"/>
</dbReference>
<dbReference type="ChiTaRS" id="Trim7">
    <property type="organism name" value="mouse"/>
</dbReference>
<dbReference type="PRO" id="PR:Q923T7"/>
<dbReference type="Proteomes" id="UP000000589">
    <property type="component" value="Chromosome 11"/>
</dbReference>
<dbReference type="RNAct" id="Q923T7">
    <property type="molecule type" value="protein"/>
</dbReference>
<dbReference type="Bgee" id="ENSMUSG00000040350">
    <property type="expression patterns" value="Expressed in right kidney and 125 other cell types or tissues"/>
</dbReference>
<dbReference type="ExpressionAtlas" id="Q923T7">
    <property type="expression patterns" value="baseline and differential"/>
</dbReference>
<dbReference type="GO" id="GO:0005737">
    <property type="term" value="C:cytoplasm"/>
    <property type="evidence" value="ECO:0000314"/>
    <property type="project" value="MGI"/>
</dbReference>
<dbReference type="GO" id="GO:0005794">
    <property type="term" value="C:Golgi apparatus"/>
    <property type="evidence" value="ECO:0007669"/>
    <property type="project" value="UniProtKB-SubCell"/>
</dbReference>
<dbReference type="GO" id="GO:0005634">
    <property type="term" value="C:nucleus"/>
    <property type="evidence" value="ECO:0000314"/>
    <property type="project" value="MGI"/>
</dbReference>
<dbReference type="GO" id="GO:0016740">
    <property type="term" value="F:transferase activity"/>
    <property type="evidence" value="ECO:0007669"/>
    <property type="project" value="UniProtKB-KW"/>
</dbReference>
<dbReference type="GO" id="GO:0008270">
    <property type="term" value="F:zinc ion binding"/>
    <property type="evidence" value="ECO:0007669"/>
    <property type="project" value="UniProtKB-KW"/>
</dbReference>
<dbReference type="GO" id="GO:0051607">
    <property type="term" value="P:defense response to virus"/>
    <property type="evidence" value="ECO:0007669"/>
    <property type="project" value="UniProtKB-KW"/>
</dbReference>
<dbReference type="GO" id="GO:0016567">
    <property type="term" value="P:protein ubiquitination"/>
    <property type="evidence" value="ECO:0007669"/>
    <property type="project" value="UniProtKB-UniPathway"/>
</dbReference>
<dbReference type="CDD" id="cd19762">
    <property type="entry name" value="Bbox2_TRIM7-like"/>
    <property type="match status" value="1"/>
</dbReference>
<dbReference type="CDD" id="cd16594">
    <property type="entry name" value="RING-HC_TRIM7-like_C-IV"/>
    <property type="match status" value="1"/>
</dbReference>
<dbReference type="CDD" id="cd13740">
    <property type="entry name" value="SPRY_PRY_TRIM7"/>
    <property type="match status" value="1"/>
</dbReference>
<dbReference type="FunFam" id="3.30.40.10:FF:000171">
    <property type="entry name" value="E3 ubiquitin-protein ligase TRIM39"/>
    <property type="match status" value="1"/>
</dbReference>
<dbReference type="FunFam" id="2.60.120.920:FF:000025">
    <property type="entry name" value="E3 ubiquitin-protein ligase TRIM41 isoform X1"/>
    <property type="match status" value="1"/>
</dbReference>
<dbReference type="Gene3D" id="2.60.120.920">
    <property type="match status" value="1"/>
</dbReference>
<dbReference type="Gene3D" id="3.30.160.60">
    <property type="entry name" value="Classic Zinc Finger"/>
    <property type="match status" value="1"/>
</dbReference>
<dbReference type="Gene3D" id="3.30.40.10">
    <property type="entry name" value="Zinc/RING finger domain, C3HC4 (zinc finger)"/>
    <property type="match status" value="1"/>
</dbReference>
<dbReference type="InterPro" id="IPR001870">
    <property type="entry name" value="B30.2/SPRY"/>
</dbReference>
<dbReference type="InterPro" id="IPR043136">
    <property type="entry name" value="B30.2/SPRY_sf"/>
</dbReference>
<dbReference type="InterPro" id="IPR003879">
    <property type="entry name" value="Butyrophylin_SPRY"/>
</dbReference>
<dbReference type="InterPro" id="IPR013320">
    <property type="entry name" value="ConA-like_dom_sf"/>
</dbReference>
<dbReference type="InterPro" id="IPR006574">
    <property type="entry name" value="PRY"/>
</dbReference>
<dbReference type="InterPro" id="IPR003877">
    <property type="entry name" value="SPRY_dom"/>
</dbReference>
<dbReference type="InterPro" id="IPR050143">
    <property type="entry name" value="TRIM/RBCC"/>
</dbReference>
<dbReference type="InterPro" id="IPR000315">
    <property type="entry name" value="Znf_B-box"/>
</dbReference>
<dbReference type="InterPro" id="IPR020457">
    <property type="entry name" value="Znf_B-box_chordata"/>
</dbReference>
<dbReference type="InterPro" id="IPR001841">
    <property type="entry name" value="Znf_RING"/>
</dbReference>
<dbReference type="InterPro" id="IPR013083">
    <property type="entry name" value="Znf_RING/FYVE/PHD"/>
</dbReference>
<dbReference type="InterPro" id="IPR017907">
    <property type="entry name" value="Znf_RING_CS"/>
</dbReference>
<dbReference type="PANTHER" id="PTHR24103">
    <property type="entry name" value="E3 UBIQUITIN-PROTEIN LIGASE TRIM"/>
    <property type="match status" value="1"/>
</dbReference>
<dbReference type="Pfam" id="PF13765">
    <property type="entry name" value="PRY"/>
    <property type="match status" value="1"/>
</dbReference>
<dbReference type="Pfam" id="PF00622">
    <property type="entry name" value="SPRY"/>
    <property type="match status" value="1"/>
</dbReference>
<dbReference type="Pfam" id="PF00643">
    <property type="entry name" value="zf-B_box"/>
    <property type="match status" value="1"/>
</dbReference>
<dbReference type="Pfam" id="PF15227">
    <property type="entry name" value="zf-C3HC4_4"/>
    <property type="match status" value="1"/>
</dbReference>
<dbReference type="PRINTS" id="PR01406">
    <property type="entry name" value="BBOXZNFINGER"/>
</dbReference>
<dbReference type="PRINTS" id="PR01407">
    <property type="entry name" value="BUTYPHLNCDUF"/>
</dbReference>
<dbReference type="SMART" id="SM00336">
    <property type="entry name" value="BBOX"/>
    <property type="match status" value="1"/>
</dbReference>
<dbReference type="SMART" id="SM00589">
    <property type="entry name" value="PRY"/>
    <property type="match status" value="1"/>
</dbReference>
<dbReference type="SMART" id="SM00184">
    <property type="entry name" value="RING"/>
    <property type="match status" value="1"/>
</dbReference>
<dbReference type="SMART" id="SM00449">
    <property type="entry name" value="SPRY"/>
    <property type="match status" value="1"/>
</dbReference>
<dbReference type="SUPFAM" id="SSF57845">
    <property type="entry name" value="B-box zinc-binding domain"/>
    <property type="match status" value="1"/>
</dbReference>
<dbReference type="SUPFAM" id="SSF49899">
    <property type="entry name" value="Concanavalin A-like lectins/glucanases"/>
    <property type="match status" value="1"/>
</dbReference>
<dbReference type="SUPFAM" id="SSF57850">
    <property type="entry name" value="RING/U-box"/>
    <property type="match status" value="1"/>
</dbReference>
<dbReference type="PROSITE" id="PS50188">
    <property type="entry name" value="B302_SPRY"/>
    <property type="match status" value="1"/>
</dbReference>
<dbReference type="PROSITE" id="PS50119">
    <property type="entry name" value="ZF_BBOX"/>
    <property type="match status" value="1"/>
</dbReference>
<dbReference type="PROSITE" id="PS00518">
    <property type="entry name" value="ZF_RING_1"/>
    <property type="match status" value="1"/>
</dbReference>
<dbReference type="PROSITE" id="PS50089">
    <property type="entry name" value="ZF_RING_2"/>
    <property type="match status" value="1"/>
</dbReference>
<keyword id="KW-0025">Alternative splicing</keyword>
<keyword id="KW-0051">Antiviral defense</keyword>
<keyword id="KW-0175">Coiled coil</keyword>
<keyword id="KW-0963">Cytoplasm</keyword>
<keyword id="KW-0333">Golgi apparatus</keyword>
<keyword id="KW-0479">Metal-binding</keyword>
<keyword id="KW-0539">Nucleus</keyword>
<keyword id="KW-0597">Phosphoprotein</keyword>
<keyword id="KW-1185">Reference proteome</keyword>
<keyword id="KW-0808">Transferase</keyword>
<keyword id="KW-0832">Ubl conjugation</keyword>
<keyword id="KW-0833">Ubl conjugation pathway</keyword>
<keyword id="KW-0862">Zinc</keyword>
<keyword id="KW-0863">Zinc-finger</keyword>